<evidence type="ECO:0000255" key="1">
    <source>
        <dbReference type="HAMAP-Rule" id="MF_00535"/>
    </source>
</evidence>
<sequence length="156" mass="17049">MIQSQINRNIRLDLADAILLSKAKKDLSFAEIADGTGLAEAFVTAALLGQQALPADAARLVGAKLDLDEDSILLLQMIPLRGCIDDRIPTDPTMYRFYEMLQVYGTTLKALVHEKFGDGIISAINFKLDVKKVADPEGGERAVITLDGKYLPTKPF</sequence>
<comment type="function">
    <text evidence="1">Catalyzes the reaction of cyanate with bicarbonate to produce ammonia and carbon dioxide.</text>
</comment>
<comment type="catalytic activity">
    <reaction evidence="1">
        <text>cyanate + hydrogencarbonate + 3 H(+) = NH4(+) + 2 CO2</text>
        <dbReference type="Rhea" id="RHEA:11120"/>
        <dbReference type="ChEBI" id="CHEBI:15378"/>
        <dbReference type="ChEBI" id="CHEBI:16526"/>
        <dbReference type="ChEBI" id="CHEBI:17544"/>
        <dbReference type="ChEBI" id="CHEBI:28938"/>
        <dbReference type="ChEBI" id="CHEBI:29195"/>
        <dbReference type="EC" id="4.2.1.104"/>
    </reaction>
</comment>
<comment type="similarity">
    <text evidence="1">Belongs to the cyanase family.</text>
</comment>
<dbReference type="EC" id="4.2.1.104" evidence="1"/>
<dbReference type="EMBL" id="CP000948">
    <property type="protein sequence ID" value="ACB02458.1"/>
    <property type="molecule type" value="Genomic_DNA"/>
</dbReference>
<dbReference type="RefSeq" id="WP_000616243.1">
    <property type="nucleotide sequence ID" value="NC_010473.1"/>
</dbReference>
<dbReference type="SMR" id="B1XBI8"/>
<dbReference type="KEGG" id="ecd:ECDH10B_1353"/>
<dbReference type="HOGENOM" id="CLU_103452_1_1_6"/>
<dbReference type="GO" id="GO:0008824">
    <property type="term" value="F:cyanate hydratase activity"/>
    <property type="evidence" value="ECO:0007669"/>
    <property type="project" value="UniProtKB-UniRule"/>
</dbReference>
<dbReference type="GO" id="GO:0003677">
    <property type="term" value="F:DNA binding"/>
    <property type="evidence" value="ECO:0007669"/>
    <property type="project" value="InterPro"/>
</dbReference>
<dbReference type="GO" id="GO:0009439">
    <property type="term" value="P:cyanate metabolic process"/>
    <property type="evidence" value="ECO:0007669"/>
    <property type="project" value="UniProtKB-UniRule"/>
</dbReference>
<dbReference type="CDD" id="cd00559">
    <property type="entry name" value="Cyanase_C"/>
    <property type="match status" value="1"/>
</dbReference>
<dbReference type="FunFam" id="3.30.1160.10:FF:000001">
    <property type="entry name" value="Cyanate hydratase"/>
    <property type="match status" value="1"/>
</dbReference>
<dbReference type="Gene3D" id="3.30.1160.10">
    <property type="entry name" value="Cyanate lyase, C-terminal domain"/>
    <property type="match status" value="1"/>
</dbReference>
<dbReference type="Gene3D" id="1.10.260.40">
    <property type="entry name" value="lambda repressor-like DNA-binding domains"/>
    <property type="match status" value="1"/>
</dbReference>
<dbReference type="HAMAP" id="MF_00535">
    <property type="entry name" value="Cyanate_hydrat"/>
    <property type="match status" value="1"/>
</dbReference>
<dbReference type="InterPro" id="IPR008076">
    <property type="entry name" value="Cyanase"/>
</dbReference>
<dbReference type="InterPro" id="IPR003712">
    <property type="entry name" value="Cyanate_lyase_C"/>
</dbReference>
<dbReference type="InterPro" id="IPR036581">
    <property type="entry name" value="Cyanate_lyase_C_sf"/>
</dbReference>
<dbReference type="InterPro" id="IPR048564">
    <property type="entry name" value="CYNS_N"/>
</dbReference>
<dbReference type="InterPro" id="IPR010982">
    <property type="entry name" value="Lambda_DNA-bd_dom_sf"/>
</dbReference>
<dbReference type="NCBIfam" id="TIGR00673">
    <property type="entry name" value="cynS"/>
    <property type="match status" value="1"/>
</dbReference>
<dbReference type="NCBIfam" id="NF002773">
    <property type="entry name" value="PRK02866.1"/>
    <property type="match status" value="1"/>
</dbReference>
<dbReference type="PANTHER" id="PTHR34186">
    <property type="entry name" value="CYANATE HYDRATASE"/>
    <property type="match status" value="1"/>
</dbReference>
<dbReference type="PANTHER" id="PTHR34186:SF2">
    <property type="entry name" value="CYANATE HYDRATASE"/>
    <property type="match status" value="1"/>
</dbReference>
<dbReference type="Pfam" id="PF02560">
    <property type="entry name" value="Cyanate_lyase"/>
    <property type="match status" value="1"/>
</dbReference>
<dbReference type="Pfam" id="PF21291">
    <property type="entry name" value="CYNS_N"/>
    <property type="match status" value="1"/>
</dbReference>
<dbReference type="PIRSF" id="PIRSF001263">
    <property type="entry name" value="Cyanate_hydratas"/>
    <property type="match status" value="1"/>
</dbReference>
<dbReference type="PRINTS" id="PR01693">
    <property type="entry name" value="CYANASE"/>
</dbReference>
<dbReference type="SMART" id="SM01116">
    <property type="entry name" value="Cyanate_lyase"/>
    <property type="match status" value="1"/>
</dbReference>
<dbReference type="SUPFAM" id="SSF55234">
    <property type="entry name" value="Cyanase C-terminal domain"/>
    <property type="match status" value="1"/>
</dbReference>
<dbReference type="SUPFAM" id="SSF47413">
    <property type="entry name" value="lambda repressor-like DNA-binding domains"/>
    <property type="match status" value="1"/>
</dbReference>
<gene>
    <name evidence="1" type="primary">cynS</name>
    <name type="ordered locus">ECDH10B_1353</name>
</gene>
<protein>
    <recommendedName>
        <fullName evidence="1">Cyanate hydratase</fullName>
        <shortName evidence="1">Cyanase</shortName>
        <ecNumber evidence="1">4.2.1.104</ecNumber>
    </recommendedName>
    <alternativeName>
        <fullName evidence="1">Cyanate hydrolase</fullName>
    </alternativeName>
    <alternativeName>
        <fullName evidence="1">Cyanate lyase</fullName>
    </alternativeName>
</protein>
<accession>B1XBI8</accession>
<keyword id="KW-0456">Lyase</keyword>
<feature type="chain" id="PRO_1000128226" description="Cyanate hydratase">
    <location>
        <begin position="1"/>
        <end position="156"/>
    </location>
</feature>
<feature type="active site" evidence="1">
    <location>
        <position position="96"/>
    </location>
</feature>
<feature type="active site" evidence="1">
    <location>
        <position position="99"/>
    </location>
</feature>
<feature type="active site" evidence="1">
    <location>
        <position position="122"/>
    </location>
</feature>
<organism>
    <name type="scientific">Escherichia coli (strain K12 / DH10B)</name>
    <dbReference type="NCBI Taxonomy" id="316385"/>
    <lineage>
        <taxon>Bacteria</taxon>
        <taxon>Pseudomonadati</taxon>
        <taxon>Pseudomonadota</taxon>
        <taxon>Gammaproteobacteria</taxon>
        <taxon>Enterobacterales</taxon>
        <taxon>Enterobacteriaceae</taxon>
        <taxon>Escherichia</taxon>
    </lineage>
</organism>
<reference key="1">
    <citation type="journal article" date="2008" name="J. Bacteriol.">
        <title>The complete genome sequence of Escherichia coli DH10B: insights into the biology of a laboratory workhorse.</title>
        <authorList>
            <person name="Durfee T."/>
            <person name="Nelson R."/>
            <person name="Baldwin S."/>
            <person name="Plunkett G. III"/>
            <person name="Burland V."/>
            <person name="Mau B."/>
            <person name="Petrosino J.F."/>
            <person name="Qin X."/>
            <person name="Muzny D.M."/>
            <person name="Ayele M."/>
            <person name="Gibbs R.A."/>
            <person name="Csorgo B."/>
            <person name="Posfai G."/>
            <person name="Weinstock G.M."/>
            <person name="Blattner F.R."/>
        </authorList>
    </citation>
    <scope>NUCLEOTIDE SEQUENCE [LARGE SCALE GENOMIC DNA]</scope>
    <source>
        <strain>K12 / DH10B</strain>
    </source>
</reference>
<proteinExistence type="inferred from homology"/>
<name>CYNS_ECODH</name>